<evidence type="ECO:0000255" key="1">
    <source>
        <dbReference type="HAMAP-Rule" id="MF_01365"/>
    </source>
</evidence>
<evidence type="ECO:0000305" key="2"/>
<sequence>MSRVAKSPVEVPAAVTVTLNGQSLSVKGGKGTLALEVHANVEVKHEGNVLTFTPRDGAKQSDALAGTTRALVNNMVVGVSQGFEKKLTLVGVGYRVKAEGNTVNLSLGYSHPVNYVLPQGVSVETPSQTEIVLKSADKQLLGQVAAEIRAFREPEPYKGKGVRYSDEVVLRKEAKKK</sequence>
<feature type="chain" id="PRO_1000143957" description="Large ribosomal subunit protein uL6">
    <location>
        <begin position="1"/>
        <end position="177"/>
    </location>
</feature>
<name>RL6_CELJU</name>
<reference key="1">
    <citation type="journal article" date="2008" name="J. Bacteriol.">
        <title>Insights into plant cell wall degradation from the genome sequence of the soil bacterium Cellvibrio japonicus.</title>
        <authorList>
            <person name="DeBoy R.T."/>
            <person name="Mongodin E.F."/>
            <person name="Fouts D.E."/>
            <person name="Tailford L.E."/>
            <person name="Khouri H."/>
            <person name="Emerson J.B."/>
            <person name="Mohamoud Y."/>
            <person name="Watkins K."/>
            <person name="Henrissat B."/>
            <person name="Gilbert H.J."/>
            <person name="Nelson K.E."/>
        </authorList>
    </citation>
    <scope>NUCLEOTIDE SEQUENCE [LARGE SCALE GENOMIC DNA]</scope>
    <source>
        <strain>Ueda107</strain>
    </source>
</reference>
<organism>
    <name type="scientific">Cellvibrio japonicus (strain Ueda107)</name>
    <name type="common">Pseudomonas fluorescens subsp. cellulosa</name>
    <dbReference type="NCBI Taxonomy" id="498211"/>
    <lineage>
        <taxon>Bacteria</taxon>
        <taxon>Pseudomonadati</taxon>
        <taxon>Pseudomonadota</taxon>
        <taxon>Gammaproteobacteria</taxon>
        <taxon>Cellvibrionales</taxon>
        <taxon>Cellvibrionaceae</taxon>
        <taxon>Cellvibrio</taxon>
    </lineage>
</organism>
<proteinExistence type="inferred from homology"/>
<gene>
    <name evidence="1" type="primary">rplF</name>
    <name type="ordered locus">CJA_0714</name>
</gene>
<protein>
    <recommendedName>
        <fullName evidence="1">Large ribosomal subunit protein uL6</fullName>
    </recommendedName>
    <alternativeName>
        <fullName evidence="2">50S ribosomal protein L6</fullName>
    </alternativeName>
</protein>
<accession>B3PK52</accession>
<dbReference type="EMBL" id="CP000934">
    <property type="protein sequence ID" value="ACE84695.1"/>
    <property type="molecule type" value="Genomic_DNA"/>
</dbReference>
<dbReference type="RefSeq" id="WP_012486377.1">
    <property type="nucleotide sequence ID" value="NC_010995.1"/>
</dbReference>
<dbReference type="SMR" id="B3PK52"/>
<dbReference type="STRING" id="498211.CJA_0714"/>
<dbReference type="KEGG" id="cja:CJA_0714"/>
<dbReference type="eggNOG" id="COG0097">
    <property type="taxonomic scope" value="Bacteria"/>
</dbReference>
<dbReference type="HOGENOM" id="CLU_065464_1_2_6"/>
<dbReference type="OrthoDB" id="9805007at2"/>
<dbReference type="Proteomes" id="UP000001036">
    <property type="component" value="Chromosome"/>
</dbReference>
<dbReference type="GO" id="GO:0022625">
    <property type="term" value="C:cytosolic large ribosomal subunit"/>
    <property type="evidence" value="ECO:0007669"/>
    <property type="project" value="TreeGrafter"/>
</dbReference>
<dbReference type="GO" id="GO:0019843">
    <property type="term" value="F:rRNA binding"/>
    <property type="evidence" value="ECO:0007669"/>
    <property type="project" value="UniProtKB-UniRule"/>
</dbReference>
<dbReference type="GO" id="GO:0003735">
    <property type="term" value="F:structural constituent of ribosome"/>
    <property type="evidence" value="ECO:0007669"/>
    <property type="project" value="InterPro"/>
</dbReference>
<dbReference type="GO" id="GO:0002181">
    <property type="term" value="P:cytoplasmic translation"/>
    <property type="evidence" value="ECO:0007669"/>
    <property type="project" value="TreeGrafter"/>
</dbReference>
<dbReference type="FunFam" id="3.90.930.12:FF:000001">
    <property type="entry name" value="50S ribosomal protein L6"/>
    <property type="match status" value="1"/>
</dbReference>
<dbReference type="FunFam" id="3.90.930.12:FF:000002">
    <property type="entry name" value="50S ribosomal protein L6"/>
    <property type="match status" value="1"/>
</dbReference>
<dbReference type="Gene3D" id="3.90.930.12">
    <property type="entry name" value="Ribosomal protein L6, alpha-beta domain"/>
    <property type="match status" value="2"/>
</dbReference>
<dbReference type="HAMAP" id="MF_01365_B">
    <property type="entry name" value="Ribosomal_uL6_B"/>
    <property type="match status" value="1"/>
</dbReference>
<dbReference type="InterPro" id="IPR000702">
    <property type="entry name" value="Ribosomal_uL6-like"/>
</dbReference>
<dbReference type="InterPro" id="IPR036789">
    <property type="entry name" value="Ribosomal_uL6-like_a/b-dom_sf"/>
</dbReference>
<dbReference type="InterPro" id="IPR020040">
    <property type="entry name" value="Ribosomal_uL6_a/b-dom"/>
</dbReference>
<dbReference type="InterPro" id="IPR019906">
    <property type="entry name" value="Ribosomal_uL6_bac-type"/>
</dbReference>
<dbReference type="InterPro" id="IPR002358">
    <property type="entry name" value="Ribosomal_uL6_CS"/>
</dbReference>
<dbReference type="NCBIfam" id="TIGR03654">
    <property type="entry name" value="L6_bact"/>
    <property type="match status" value="1"/>
</dbReference>
<dbReference type="PANTHER" id="PTHR11655">
    <property type="entry name" value="60S/50S RIBOSOMAL PROTEIN L6/L9"/>
    <property type="match status" value="1"/>
</dbReference>
<dbReference type="PANTHER" id="PTHR11655:SF14">
    <property type="entry name" value="LARGE RIBOSOMAL SUBUNIT PROTEIN UL6M"/>
    <property type="match status" value="1"/>
</dbReference>
<dbReference type="Pfam" id="PF00347">
    <property type="entry name" value="Ribosomal_L6"/>
    <property type="match status" value="2"/>
</dbReference>
<dbReference type="PIRSF" id="PIRSF002162">
    <property type="entry name" value="Ribosomal_L6"/>
    <property type="match status" value="1"/>
</dbReference>
<dbReference type="PRINTS" id="PR00059">
    <property type="entry name" value="RIBOSOMALL6"/>
</dbReference>
<dbReference type="SUPFAM" id="SSF56053">
    <property type="entry name" value="Ribosomal protein L6"/>
    <property type="match status" value="2"/>
</dbReference>
<dbReference type="PROSITE" id="PS00525">
    <property type="entry name" value="RIBOSOMAL_L6_1"/>
    <property type="match status" value="1"/>
</dbReference>
<keyword id="KW-1185">Reference proteome</keyword>
<keyword id="KW-0687">Ribonucleoprotein</keyword>
<keyword id="KW-0689">Ribosomal protein</keyword>
<keyword id="KW-0694">RNA-binding</keyword>
<keyword id="KW-0699">rRNA-binding</keyword>
<comment type="function">
    <text evidence="1">This protein binds to the 23S rRNA, and is important in its secondary structure. It is located near the subunit interface in the base of the L7/L12 stalk, and near the tRNA binding site of the peptidyltransferase center.</text>
</comment>
<comment type="subunit">
    <text evidence="1">Part of the 50S ribosomal subunit.</text>
</comment>
<comment type="similarity">
    <text evidence="1">Belongs to the universal ribosomal protein uL6 family.</text>
</comment>